<reference key="1">
    <citation type="journal article" date="2007" name="PLoS ONE">
        <title>Paradoxical DNA repair and peroxide resistance gene conservation in Bacillus pumilus SAFR-032.</title>
        <authorList>
            <person name="Gioia J."/>
            <person name="Yerrapragada S."/>
            <person name="Qin X."/>
            <person name="Jiang H."/>
            <person name="Igboeli O.C."/>
            <person name="Muzny D."/>
            <person name="Dugan-Rocha S."/>
            <person name="Ding Y."/>
            <person name="Hawes A."/>
            <person name="Liu W."/>
            <person name="Perez L."/>
            <person name="Kovar C."/>
            <person name="Dinh H."/>
            <person name="Lee S."/>
            <person name="Nazareth L."/>
            <person name="Blyth P."/>
            <person name="Holder M."/>
            <person name="Buhay C."/>
            <person name="Tirumalai M.R."/>
            <person name="Liu Y."/>
            <person name="Dasgupta I."/>
            <person name="Bokhetache L."/>
            <person name="Fujita M."/>
            <person name="Karouia F."/>
            <person name="Eswara Moorthy P."/>
            <person name="Siefert J."/>
            <person name="Uzman A."/>
            <person name="Buzumbo P."/>
            <person name="Verma A."/>
            <person name="Zwiya H."/>
            <person name="McWilliams B.D."/>
            <person name="Olowu A."/>
            <person name="Clinkenbeard K.D."/>
            <person name="Newcombe D."/>
            <person name="Golebiewski L."/>
            <person name="Petrosino J.F."/>
            <person name="Nicholson W.L."/>
            <person name="Fox G.E."/>
            <person name="Venkateswaran K."/>
            <person name="Highlander S.K."/>
            <person name="Weinstock G.M."/>
        </authorList>
    </citation>
    <scope>NUCLEOTIDE SEQUENCE [LARGE SCALE GENOMIC DNA]</scope>
    <source>
        <strain>SAFR-032</strain>
    </source>
</reference>
<evidence type="ECO:0000255" key="1">
    <source>
        <dbReference type="HAMAP-Rule" id="MF_00036"/>
    </source>
</evidence>
<evidence type="ECO:0000256" key="2">
    <source>
        <dbReference type="SAM" id="MobiDB-lite"/>
    </source>
</evidence>
<sequence>MKTLTSAQVRQMFLDFFKEKGHAVEPSASLVPHDDPTLLWINSGVATLKKYFDGRVVPDNPRICNAQKSIRTNDIENVGKTARHHTFFEMLGNFSIGDYFKEEAIEWAWEFLTSDEWIGFDPNLLSVTVHPEDEEAYVLWRDKIGVPEERIIRLEGNFWDIGEGPSGPNTEIFYDRGESYGHDMNDPELYPGGENERYLEVWNLVFSEFNHNPDGSYTPLPKKNIDTGMGLERMVSVIQNVPTNFDTDLFMPIIRAVETISGESYGETKEKDTAFKVIADHIRTVAFAVSDGALPSNEGRGYVLRRLLRRAVRYAKTIHIHRPFMFDLVPVVAEIMKDFYPDVQAKEEFIAKVIKNEEERFHETLNEGLAILSEVIKKERDKGSSQISGEDVFKLYDTYGFPVELTEEYAEDEHMTVDREGFQAEMEKQRERARNARQDVGSMQVQGGALGDIKVESTFVGYENLTAVAHMIELLQNGEIVSEAHEGDTVQILLDETPFYAESGGQVADKGTLKSAEVIIDIKDVKKAPNGQHVHEGVVVSGTAKKGLVVTAEVESALRKGIVKNHTATHLLHQALKDVLGSHVNQAGSLVNENRLRFDFSHFGQVTKEELSQIEKIVNEKIWEGISVAIDLKPIAEAKEMGAMALFGEKYGDIVRVVQVGDYSIELCGGCHVQNTAEIGLFKIASESGIGAGTRRIEAVTGKGAYEELNDQLGILEQAASELKSNTKDVPKRIASLQADLKEVQRENESLLAKLSQAEAGSILEKVTEIGGVKVLTEKVNAKDMNHLRTMVDDLKAKLGSAVIVLGAVQNGKVNISAGVTKDVIEKGLHAGKLVKQAAEICGGGGGGRPDMAQAGGKQPEKLEEALTSVEESVKSVL</sequence>
<proteinExistence type="inferred from homology"/>
<feature type="chain" id="PRO_0000347499" description="Alanine--tRNA ligase">
    <location>
        <begin position="1"/>
        <end position="878"/>
    </location>
</feature>
<feature type="region of interest" description="Disordered" evidence="2">
    <location>
        <begin position="846"/>
        <end position="866"/>
    </location>
</feature>
<feature type="binding site" evidence="1">
    <location>
        <position position="566"/>
    </location>
    <ligand>
        <name>Zn(2+)</name>
        <dbReference type="ChEBI" id="CHEBI:29105"/>
    </ligand>
</feature>
<feature type="binding site" evidence="1">
    <location>
        <position position="570"/>
    </location>
    <ligand>
        <name>Zn(2+)</name>
        <dbReference type="ChEBI" id="CHEBI:29105"/>
    </ligand>
</feature>
<feature type="binding site" evidence="1">
    <location>
        <position position="668"/>
    </location>
    <ligand>
        <name>Zn(2+)</name>
        <dbReference type="ChEBI" id="CHEBI:29105"/>
    </ligand>
</feature>
<feature type="binding site" evidence="1">
    <location>
        <position position="672"/>
    </location>
    <ligand>
        <name>Zn(2+)</name>
        <dbReference type="ChEBI" id="CHEBI:29105"/>
    </ligand>
</feature>
<organism>
    <name type="scientific">Bacillus pumilus (strain SAFR-032)</name>
    <dbReference type="NCBI Taxonomy" id="315750"/>
    <lineage>
        <taxon>Bacteria</taxon>
        <taxon>Bacillati</taxon>
        <taxon>Bacillota</taxon>
        <taxon>Bacilli</taxon>
        <taxon>Bacillales</taxon>
        <taxon>Bacillaceae</taxon>
        <taxon>Bacillus</taxon>
    </lineage>
</organism>
<accession>A8FFM9</accession>
<protein>
    <recommendedName>
        <fullName evidence="1">Alanine--tRNA ligase</fullName>
        <ecNumber evidence="1">6.1.1.7</ecNumber>
    </recommendedName>
    <alternativeName>
        <fullName evidence="1">Alanyl-tRNA synthetase</fullName>
        <shortName evidence="1">AlaRS</shortName>
    </alternativeName>
</protein>
<comment type="function">
    <text evidence="1">Catalyzes the attachment of alanine to tRNA(Ala) in a two-step reaction: alanine is first activated by ATP to form Ala-AMP and then transferred to the acceptor end of tRNA(Ala). Also edits incorrectly charged Ser-tRNA(Ala) and Gly-tRNA(Ala) via its editing domain.</text>
</comment>
<comment type="catalytic activity">
    <reaction evidence="1">
        <text>tRNA(Ala) + L-alanine + ATP = L-alanyl-tRNA(Ala) + AMP + diphosphate</text>
        <dbReference type="Rhea" id="RHEA:12540"/>
        <dbReference type="Rhea" id="RHEA-COMP:9657"/>
        <dbReference type="Rhea" id="RHEA-COMP:9923"/>
        <dbReference type="ChEBI" id="CHEBI:30616"/>
        <dbReference type="ChEBI" id="CHEBI:33019"/>
        <dbReference type="ChEBI" id="CHEBI:57972"/>
        <dbReference type="ChEBI" id="CHEBI:78442"/>
        <dbReference type="ChEBI" id="CHEBI:78497"/>
        <dbReference type="ChEBI" id="CHEBI:456215"/>
        <dbReference type="EC" id="6.1.1.7"/>
    </reaction>
</comment>
<comment type="cofactor">
    <cofactor evidence="1">
        <name>Zn(2+)</name>
        <dbReference type="ChEBI" id="CHEBI:29105"/>
    </cofactor>
    <text evidence="1">Binds 1 zinc ion per subunit.</text>
</comment>
<comment type="subcellular location">
    <subcellularLocation>
        <location evidence="1">Cytoplasm</location>
    </subcellularLocation>
</comment>
<comment type="domain">
    <text evidence="1">Consists of three domains; the N-terminal catalytic domain, the editing domain and the C-terminal C-Ala domain. The editing domain removes incorrectly charged amino acids, while the C-Ala domain, along with tRNA(Ala), serves as a bridge to cooperatively bring together the editing and aminoacylation centers thus stimulating deacylation of misacylated tRNAs.</text>
</comment>
<comment type="similarity">
    <text evidence="1">Belongs to the class-II aminoacyl-tRNA synthetase family.</text>
</comment>
<keyword id="KW-0030">Aminoacyl-tRNA synthetase</keyword>
<keyword id="KW-0067">ATP-binding</keyword>
<keyword id="KW-0963">Cytoplasm</keyword>
<keyword id="KW-0436">Ligase</keyword>
<keyword id="KW-0479">Metal-binding</keyword>
<keyword id="KW-0547">Nucleotide-binding</keyword>
<keyword id="KW-0648">Protein biosynthesis</keyword>
<keyword id="KW-0694">RNA-binding</keyword>
<keyword id="KW-0820">tRNA-binding</keyword>
<keyword id="KW-0862">Zinc</keyword>
<dbReference type="EC" id="6.1.1.7" evidence="1"/>
<dbReference type="EMBL" id="CP000813">
    <property type="protein sequence ID" value="ABV63046.1"/>
    <property type="molecule type" value="Genomic_DNA"/>
</dbReference>
<dbReference type="RefSeq" id="WP_012010716.1">
    <property type="nucleotide sequence ID" value="NZ_VEIS01000010.1"/>
</dbReference>
<dbReference type="SMR" id="A8FFM9"/>
<dbReference type="STRING" id="315750.BPUM_2380"/>
<dbReference type="GeneID" id="5621644"/>
<dbReference type="KEGG" id="bpu:BPUM_2380"/>
<dbReference type="eggNOG" id="COG0013">
    <property type="taxonomic scope" value="Bacteria"/>
</dbReference>
<dbReference type="HOGENOM" id="CLU_004485_1_1_9"/>
<dbReference type="OrthoDB" id="9803884at2"/>
<dbReference type="Proteomes" id="UP000001355">
    <property type="component" value="Chromosome"/>
</dbReference>
<dbReference type="GO" id="GO:0005829">
    <property type="term" value="C:cytosol"/>
    <property type="evidence" value="ECO:0007669"/>
    <property type="project" value="TreeGrafter"/>
</dbReference>
<dbReference type="GO" id="GO:0004813">
    <property type="term" value="F:alanine-tRNA ligase activity"/>
    <property type="evidence" value="ECO:0007669"/>
    <property type="project" value="UniProtKB-UniRule"/>
</dbReference>
<dbReference type="GO" id="GO:0002161">
    <property type="term" value="F:aminoacyl-tRNA deacylase activity"/>
    <property type="evidence" value="ECO:0007669"/>
    <property type="project" value="TreeGrafter"/>
</dbReference>
<dbReference type="GO" id="GO:0005524">
    <property type="term" value="F:ATP binding"/>
    <property type="evidence" value="ECO:0007669"/>
    <property type="project" value="UniProtKB-UniRule"/>
</dbReference>
<dbReference type="GO" id="GO:0140096">
    <property type="term" value="F:catalytic activity, acting on a protein"/>
    <property type="evidence" value="ECO:0007669"/>
    <property type="project" value="UniProtKB-ARBA"/>
</dbReference>
<dbReference type="GO" id="GO:0016740">
    <property type="term" value="F:transferase activity"/>
    <property type="evidence" value="ECO:0007669"/>
    <property type="project" value="UniProtKB-ARBA"/>
</dbReference>
<dbReference type="GO" id="GO:0000049">
    <property type="term" value="F:tRNA binding"/>
    <property type="evidence" value="ECO:0007669"/>
    <property type="project" value="UniProtKB-KW"/>
</dbReference>
<dbReference type="GO" id="GO:0008270">
    <property type="term" value="F:zinc ion binding"/>
    <property type="evidence" value="ECO:0007669"/>
    <property type="project" value="UniProtKB-UniRule"/>
</dbReference>
<dbReference type="GO" id="GO:0006419">
    <property type="term" value="P:alanyl-tRNA aminoacylation"/>
    <property type="evidence" value="ECO:0007669"/>
    <property type="project" value="UniProtKB-UniRule"/>
</dbReference>
<dbReference type="CDD" id="cd00673">
    <property type="entry name" value="AlaRS_core"/>
    <property type="match status" value="1"/>
</dbReference>
<dbReference type="FunFam" id="2.40.30.130:FF:000001">
    <property type="entry name" value="Alanine--tRNA ligase"/>
    <property type="match status" value="1"/>
</dbReference>
<dbReference type="FunFam" id="3.10.310.40:FF:000001">
    <property type="entry name" value="Alanine--tRNA ligase"/>
    <property type="match status" value="1"/>
</dbReference>
<dbReference type="FunFam" id="3.30.54.20:FF:000001">
    <property type="entry name" value="Alanine--tRNA ligase"/>
    <property type="match status" value="1"/>
</dbReference>
<dbReference type="FunFam" id="3.30.930.10:FF:000046">
    <property type="entry name" value="Alanine--tRNA ligase"/>
    <property type="match status" value="1"/>
</dbReference>
<dbReference type="FunFam" id="3.30.980.10:FF:000004">
    <property type="entry name" value="Alanine--tRNA ligase, cytoplasmic"/>
    <property type="match status" value="1"/>
</dbReference>
<dbReference type="Gene3D" id="2.40.30.130">
    <property type="match status" value="1"/>
</dbReference>
<dbReference type="Gene3D" id="3.10.310.40">
    <property type="match status" value="1"/>
</dbReference>
<dbReference type="Gene3D" id="3.30.54.20">
    <property type="match status" value="1"/>
</dbReference>
<dbReference type="Gene3D" id="6.10.250.550">
    <property type="match status" value="1"/>
</dbReference>
<dbReference type="Gene3D" id="3.30.930.10">
    <property type="entry name" value="Bira Bifunctional Protein, Domain 2"/>
    <property type="match status" value="1"/>
</dbReference>
<dbReference type="Gene3D" id="3.30.980.10">
    <property type="entry name" value="Threonyl-trna Synthetase, Chain A, domain 2"/>
    <property type="match status" value="1"/>
</dbReference>
<dbReference type="HAMAP" id="MF_00036_B">
    <property type="entry name" value="Ala_tRNA_synth_B"/>
    <property type="match status" value="1"/>
</dbReference>
<dbReference type="InterPro" id="IPR045864">
    <property type="entry name" value="aa-tRNA-synth_II/BPL/LPL"/>
</dbReference>
<dbReference type="InterPro" id="IPR002318">
    <property type="entry name" value="Ala-tRNA-lgiase_IIc"/>
</dbReference>
<dbReference type="InterPro" id="IPR018162">
    <property type="entry name" value="Ala-tRNA-ligase_IIc_anticod-bd"/>
</dbReference>
<dbReference type="InterPro" id="IPR018165">
    <property type="entry name" value="Ala-tRNA-synth_IIc_core"/>
</dbReference>
<dbReference type="InterPro" id="IPR018164">
    <property type="entry name" value="Ala-tRNA-synth_IIc_N"/>
</dbReference>
<dbReference type="InterPro" id="IPR050058">
    <property type="entry name" value="Ala-tRNA_ligase"/>
</dbReference>
<dbReference type="InterPro" id="IPR023033">
    <property type="entry name" value="Ala_tRNA_ligase_euk/bac"/>
</dbReference>
<dbReference type="InterPro" id="IPR003156">
    <property type="entry name" value="DHHA1_dom"/>
</dbReference>
<dbReference type="InterPro" id="IPR018163">
    <property type="entry name" value="Thr/Ala-tRNA-synth_IIc_edit"/>
</dbReference>
<dbReference type="InterPro" id="IPR009000">
    <property type="entry name" value="Transl_B-barrel_sf"/>
</dbReference>
<dbReference type="InterPro" id="IPR012947">
    <property type="entry name" value="tRNA_SAD"/>
</dbReference>
<dbReference type="NCBIfam" id="TIGR00344">
    <property type="entry name" value="alaS"/>
    <property type="match status" value="1"/>
</dbReference>
<dbReference type="PANTHER" id="PTHR11777:SF9">
    <property type="entry name" value="ALANINE--TRNA LIGASE, CYTOPLASMIC"/>
    <property type="match status" value="1"/>
</dbReference>
<dbReference type="PANTHER" id="PTHR11777">
    <property type="entry name" value="ALANYL-TRNA SYNTHETASE"/>
    <property type="match status" value="1"/>
</dbReference>
<dbReference type="Pfam" id="PF02272">
    <property type="entry name" value="DHHA1"/>
    <property type="match status" value="1"/>
</dbReference>
<dbReference type="Pfam" id="PF01411">
    <property type="entry name" value="tRNA-synt_2c"/>
    <property type="match status" value="1"/>
</dbReference>
<dbReference type="Pfam" id="PF07973">
    <property type="entry name" value="tRNA_SAD"/>
    <property type="match status" value="1"/>
</dbReference>
<dbReference type="PRINTS" id="PR00980">
    <property type="entry name" value="TRNASYNTHALA"/>
</dbReference>
<dbReference type="SMART" id="SM00863">
    <property type="entry name" value="tRNA_SAD"/>
    <property type="match status" value="1"/>
</dbReference>
<dbReference type="SUPFAM" id="SSF55681">
    <property type="entry name" value="Class II aaRS and biotin synthetases"/>
    <property type="match status" value="1"/>
</dbReference>
<dbReference type="SUPFAM" id="SSF101353">
    <property type="entry name" value="Putative anticodon-binding domain of alanyl-tRNA synthetase (AlaRS)"/>
    <property type="match status" value="1"/>
</dbReference>
<dbReference type="SUPFAM" id="SSF55186">
    <property type="entry name" value="ThrRS/AlaRS common domain"/>
    <property type="match status" value="1"/>
</dbReference>
<dbReference type="SUPFAM" id="SSF50447">
    <property type="entry name" value="Translation proteins"/>
    <property type="match status" value="1"/>
</dbReference>
<dbReference type="PROSITE" id="PS50860">
    <property type="entry name" value="AA_TRNA_LIGASE_II_ALA"/>
    <property type="match status" value="1"/>
</dbReference>
<name>SYA_BACP2</name>
<gene>
    <name evidence="1" type="primary">alaS</name>
    <name type="ordered locus">BPUM_2380</name>
</gene>